<protein>
    <recommendedName>
        <fullName>RAS guanyl-releasing protein 1</fullName>
    </recommendedName>
    <alternativeName>
        <fullName>Calcium and DAG-regulated guanine nucleotide exchange factor II</fullName>
        <shortName>CalDAG-GEFII</shortName>
    </alternativeName>
    <alternativeName>
        <fullName>Ras guanyl-releasing protein</fullName>
    </alternativeName>
</protein>
<evidence type="ECO:0000250" key="1"/>
<evidence type="ECO:0000250" key="2">
    <source>
        <dbReference type="UniProtKB" id="O95267"/>
    </source>
</evidence>
<evidence type="ECO:0000250" key="3">
    <source>
        <dbReference type="UniProtKB" id="Q9R1K8"/>
    </source>
</evidence>
<evidence type="ECO:0000255" key="4"/>
<evidence type="ECO:0000255" key="5">
    <source>
        <dbReference type="PROSITE-ProRule" id="PRU00135"/>
    </source>
</evidence>
<evidence type="ECO:0000255" key="6">
    <source>
        <dbReference type="PROSITE-ProRule" id="PRU00168"/>
    </source>
</evidence>
<evidence type="ECO:0000255" key="7">
    <source>
        <dbReference type="PROSITE-ProRule" id="PRU00226"/>
    </source>
</evidence>
<evidence type="ECO:0000255" key="8">
    <source>
        <dbReference type="PROSITE-ProRule" id="PRU00448"/>
    </source>
</evidence>
<evidence type="ECO:0000256" key="9">
    <source>
        <dbReference type="SAM" id="MobiDB-lite"/>
    </source>
</evidence>
<evidence type="ECO:0000269" key="10">
    <source>
    </source>
</evidence>
<evidence type="ECO:0000269" key="11">
    <source>
    </source>
</evidence>
<evidence type="ECO:0000269" key="12">
    <source>
    </source>
</evidence>
<evidence type="ECO:0000269" key="13">
    <source>
    </source>
</evidence>
<evidence type="ECO:0000269" key="14">
    <source>
    </source>
</evidence>
<evidence type="ECO:0000269" key="15">
    <source>
    </source>
</evidence>
<evidence type="ECO:0000269" key="16">
    <source>
    </source>
</evidence>
<evidence type="ECO:0000269" key="17">
    <source>
    </source>
</evidence>
<evidence type="ECO:0000269" key="18">
    <source>
    </source>
</evidence>
<evidence type="ECO:0000269" key="19">
    <source>
    </source>
</evidence>
<evidence type="ECO:0000269" key="20">
    <source>
    </source>
</evidence>
<evidence type="ECO:0000269" key="21">
    <source>
    </source>
</evidence>
<evidence type="ECO:0000269" key="22">
    <source>
    </source>
</evidence>
<evidence type="ECO:0000269" key="23">
    <source>
    </source>
</evidence>
<evidence type="ECO:0000269" key="24">
    <source>
    </source>
</evidence>
<evidence type="ECO:0000305" key="25"/>
<keyword id="KW-0106">Calcium</keyword>
<keyword id="KW-1003">Cell membrane</keyword>
<keyword id="KW-0175">Coiled coil</keyword>
<keyword id="KW-0963">Cytoplasm</keyword>
<keyword id="KW-0221">Differentiation</keyword>
<keyword id="KW-0256">Endoplasmic reticulum</keyword>
<keyword id="KW-0333">Golgi apparatus</keyword>
<keyword id="KW-0344">Guanine-nucleotide releasing factor</keyword>
<keyword id="KW-0472">Membrane</keyword>
<keyword id="KW-0479">Metal-binding</keyword>
<keyword id="KW-0597">Phosphoprotein</keyword>
<keyword id="KW-0656">Proto-oncogene</keyword>
<keyword id="KW-1185">Reference proteome</keyword>
<keyword id="KW-0677">Repeat</keyword>
<keyword id="KW-0862">Zinc</keyword>
<keyword id="KW-0863">Zinc-finger</keyword>
<comment type="function">
    <text evidence="2 10 11 12 13 15 16 17 18 19 20 21 24">Functions as a calcium- and diacylglycerol (DAG)-regulated nucleotide exchange factor specifically activating Ras through the exchange of bound GDP for GTP. Activates the Erk/MAP kinase cascade. Regulates T-cell/B-cell development, homeostasis and differentiation by coupling T-lymphocyte/B-lymphocyte antigen receptors to Ras. Regulates NK cell cytotoxicity and ITAM-dependent cytokine production by activation of Ras-mediated ERK and JNK pathways (By similarity). Functions in mast cell degranulation and cytokine secretion, regulating FcERI-evoked allergic responses (PubMed:17190838). May also function in differentiation of other cell types. Proto-oncogene, which promotes T-cell lymphomagenesis when its expression is deregulated (PubMed:15829980, PubMed:17210708).</text>
</comment>
<comment type="activity regulation">
    <text evidence="2">Autoinhibited. Activated by diacylglycerol and calcium binding, which induces a conformational change releasing the autoinhibitory state. Regulated by DGKA. Regulated by DGKZ. Regulated by PLC gamma and F-actin polymerization (By similarity).</text>
</comment>
<comment type="subunit">
    <text evidence="2">Homodimer. Forms a signaling complex with DGKZ and HRAS. Interacts with F-actin. Interacts with SKAP1 (By similarity).</text>
</comment>
<comment type="subcellular location">
    <subcellularLocation>
        <location evidence="1">Cytoplasm</location>
        <location evidence="1">Cytosol</location>
    </subcellularLocation>
    <subcellularLocation>
        <location evidence="1">Cell membrane</location>
        <topology evidence="1">Peripheral membrane protein</topology>
    </subcellularLocation>
    <subcellularLocation>
        <location>Golgi apparatus membrane</location>
        <topology>Peripheral membrane protein</topology>
    </subcellularLocation>
    <subcellularLocation>
        <location evidence="1">Endoplasmic reticulum membrane</location>
        <topology evidence="1">Peripheral membrane protein</topology>
    </subcellularLocation>
    <text evidence="1">Found both in the cytosol and associated with membranes. Relocalization to the cell membrane upon activation is F-actin-dependent (By similarity). Translocates to the Golgi in response to phorbol ester or nerve growth factor. Localizes to somata and dendrites but not to axons of hippocampal pyramidal cells (By similarity).</text>
</comment>
<comment type="tissue specificity">
    <text evidence="10 11 15 16 20 24">Detected in spleen and thymus. Expressed by mature thymocytes and to a lower extent by bone marrow-derived mast cells (at protein level). Detected in B-cells and keratinocytes (at protein level).</text>
</comment>
<comment type="induction">
    <text evidence="12 15">Up-regulated at the double-negative to double-positive transition during thymocyte development. Down-regulated by 12-O-tetradecanoylphorbol-13-acetate (TPA).</text>
</comment>
<comment type="domain">
    <text>The phorbol-ester/DAG-type zinc finger is the principal mediator of the targeting to membranes and is required for functional activation through DAG-binding.</text>
</comment>
<comment type="domain">
    <text evidence="2">Two EF-hand domains are present. However, only EF-hand 1 (and not EF-hand 2) binds calcium.</text>
</comment>
<comment type="disruption phenotype">
    <text evidence="10 19 22">Mice fail to mount anaphylactic allergic reactions and display chronic T-cell immunodeficiencies. Lag (lymphoproliferation-autoimmunity-glomerulonephritis) mice do not express Rasgrp1 and display a systemic lupus erythematosus-like phenotype.</text>
</comment>
<comment type="similarity">
    <text evidence="25">Belongs to the RASGRP family.</text>
</comment>
<comment type="caution">
    <text evidence="14 23 25">Was reported that thymocytes isolated from a RasGRP1 mutant mouse strain show a defect in Ras activation following T-cell-receptor (TCR) engagement (PubMed:12932358). However, this paper has been retracted because the data in one figure was falsified by one of the authors (PubMed:22808526). The authors stand by the validity of the other figures, results and interpretation in this paper (PubMed:22808526). Furthermore, evidence supporting function is derived by similarity with the human ortholog, so may be true.</text>
</comment>
<feature type="chain" id="PRO_0000316979" description="RAS guanyl-releasing protein 1">
    <location>
        <begin position="1"/>
        <end position="795"/>
    </location>
</feature>
<feature type="domain" description="N-terminal Ras-GEF" evidence="5">
    <location>
        <begin position="53"/>
        <end position="176"/>
    </location>
</feature>
<feature type="domain" description="Ras-GEF" evidence="6">
    <location>
        <begin position="205"/>
        <end position="436"/>
    </location>
</feature>
<feature type="domain" description="EF-hand 1" evidence="8">
    <location>
        <begin position="470"/>
        <end position="505"/>
    </location>
</feature>
<feature type="domain" description="EF-hand 2" evidence="8">
    <location>
        <begin position="506"/>
        <end position="532"/>
    </location>
</feature>
<feature type="zinc finger region" description="Phorbol-ester/DAG-type" evidence="7">
    <location>
        <begin position="541"/>
        <end position="591"/>
    </location>
</feature>
<feature type="region of interest" description="Disordered" evidence="9">
    <location>
        <begin position="1"/>
        <end position="37"/>
    </location>
</feature>
<feature type="region of interest" description="Ras exchanger motif region; required for transforming activity">
    <location>
        <begin position="57"/>
        <end position="110"/>
    </location>
</feature>
<feature type="region of interest" description="Suppress the PT region-mediated translocation to plasma membrane">
    <location>
        <begin position="686"/>
        <end position="694"/>
    </location>
</feature>
<feature type="region of interest" description="PT region; mediates the BCR-dependent translocation to plasma membrane">
    <location>
        <begin position="717"/>
        <end position="795"/>
    </location>
</feature>
<feature type="coiled-coil region" evidence="4">
    <location>
        <begin position="738"/>
        <end position="779"/>
    </location>
</feature>
<feature type="compositionally biased region" description="Basic and acidic residues" evidence="9">
    <location>
        <begin position="1"/>
        <end position="12"/>
    </location>
</feature>
<feature type="binding site" evidence="8">
    <location>
        <position position="483"/>
    </location>
    <ligand>
        <name>Ca(2+)</name>
        <dbReference type="ChEBI" id="CHEBI:29108"/>
    </ligand>
</feature>
<feature type="binding site" evidence="8">
    <location>
        <position position="485"/>
    </location>
    <ligand>
        <name>Ca(2+)</name>
        <dbReference type="ChEBI" id="CHEBI:29108"/>
    </ligand>
</feature>
<feature type="binding site" evidence="8">
    <location>
        <position position="487"/>
    </location>
    <ligand>
        <name>Ca(2+)</name>
        <dbReference type="ChEBI" id="CHEBI:29108"/>
    </ligand>
</feature>
<feature type="binding site" evidence="8">
    <location>
        <position position="489"/>
    </location>
    <ligand>
        <name>Ca(2+)</name>
        <dbReference type="ChEBI" id="CHEBI:29108"/>
    </ligand>
</feature>
<feature type="binding site" evidence="8">
    <location>
        <position position="494"/>
    </location>
    <ligand>
        <name>Ca(2+)</name>
        <dbReference type="ChEBI" id="CHEBI:29108"/>
    </ligand>
</feature>
<feature type="modified residue" description="Phosphothreonine; by PKC" evidence="2">
    <location>
        <position position="184"/>
    </location>
</feature>
<feature type="modified residue" description="Phosphoserine" evidence="3">
    <location>
        <position position="597"/>
    </location>
</feature>
<feature type="mutagenesis site" description="Loss of function and transforming activity." evidence="16 24">
    <original>R</original>
    <variation>E</variation>
    <location>
        <position position="271"/>
    </location>
</feature>
<feature type="sequence conflict" description="In Ref. 2; BAE24718." evidence="25" ref="2">
    <original>T</original>
    <variation>R</variation>
    <location>
        <position position="171"/>
    </location>
</feature>
<feature type="sequence conflict" description="In Ref. 2; BAE20439." evidence="25" ref="2">
    <original>Q</original>
    <variation>K</variation>
    <location>
        <position position="472"/>
    </location>
</feature>
<feature type="sequence conflict" description="In Ref. 2; BAE20439." evidence="25" ref="2">
    <original>D</original>
    <variation>E</variation>
    <location>
        <position position="485"/>
    </location>
</feature>
<feature type="sequence conflict" description="In Ref. 2; BAE20439." evidence="25" ref="2">
    <original>S</original>
    <variation>T</variation>
    <location>
        <position position="501"/>
    </location>
</feature>
<feature type="sequence conflict" description="In Ref. 2; BAE20439." evidence="25" ref="2">
    <original>D</original>
    <variation>H</variation>
    <location>
        <position position="520"/>
    </location>
</feature>
<feature type="sequence conflict" description="In Ref. 2; BAC33100." evidence="25" ref="2">
    <original>K</original>
    <variation>R</variation>
    <location>
        <position position="768"/>
    </location>
</feature>
<dbReference type="EMBL" id="AF106070">
    <property type="protein sequence ID" value="AAC97348.1"/>
    <property type="molecule type" value="mRNA"/>
</dbReference>
<dbReference type="EMBL" id="AK028308">
    <property type="protein sequence ID" value="BAE20439.1"/>
    <property type="molecule type" value="mRNA"/>
</dbReference>
<dbReference type="EMBL" id="AK047613">
    <property type="protein sequence ID" value="BAC33100.1"/>
    <property type="molecule type" value="mRNA"/>
</dbReference>
<dbReference type="EMBL" id="AK141524">
    <property type="protein sequence ID" value="BAE24718.1"/>
    <property type="molecule type" value="mRNA"/>
</dbReference>
<dbReference type="EMBL" id="AL844579">
    <property type="status" value="NOT_ANNOTATED_CDS"/>
    <property type="molecule type" value="Genomic_DNA"/>
</dbReference>
<dbReference type="EMBL" id="AL928959">
    <property type="status" value="NOT_ANNOTATED_CDS"/>
    <property type="molecule type" value="Genomic_DNA"/>
</dbReference>
<dbReference type="EMBL" id="BC057120">
    <property type="protein sequence ID" value="AAH57120.1"/>
    <property type="molecule type" value="mRNA"/>
</dbReference>
<dbReference type="EMBL" id="BC057341">
    <property type="protein sequence ID" value="AAH57341.1"/>
    <property type="molecule type" value="mRNA"/>
</dbReference>
<dbReference type="CCDS" id="CCDS16572.1"/>
<dbReference type="RefSeq" id="NP_035376.1">
    <property type="nucleotide sequence ID" value="NM_011246.3"/>
</dbReference>
<dbReference type="SMR" id="Q9Z1S3"/>
<dbReference type="FunCoup" id="Q9Z1S3">
    <property type="interactions" value="1339"/>
</dbReference>
<dbReference type="IntAct" id="Q9Z1S3">
    <property type="interactions" value="4"/>
</dbReference>
<dbReference type="MINT" id="Q9Z1S3"/>
<dbReference type="STRING" id="10090.ENSMUSP00000099593"/>
<dbReference type="iPTMnet" id="Q9Z1S3"/>
<dbReference type="PhosphoSitePlus" id="Q9Z1S3"/>
<dbReference type="jPOST" id="Q9Z1S3"/>
<dbReference type="PaxDb" id="10090-ENSMUSP00000099593"/>
<dbReference type="ProteomicsDB" id="271099"/>
<dbReference type="Antibodypedia" id="53148">
    <property type="antibodies" value="143 antibodies from 23 providers"/>
</dbReference>
<dbReference type="DNASU" id="19419"/>
<dbReference type="Ensembl" id="ENSMUST00000102534.11">
    <property type="protein sequence ID" value="ENSMUSP00000099593.5"/>
    <property type="gene ID" value="ENSMUSG00000027347.20"/>
</dbReference>
<dbReference type="GeneID" id="19419"/>
<dbReference type="KEGG" id="mmu:19419"/>
<dbReference type="UCSC" id="uc033hpk.1">
    <property type="organism name" value="mouse"/>
</dbReference>
<dbReference type="AGR" id="MGI:1314635"/>
<dbReference type="CTD" id="10125"/>
<dbReference type="MGI" id="MGI:1314635">
    <property type="gene designation" value="Rasgrp1"/>
</dbReference>
<dbReference type="VEuPathDB" id="HostDB:ENSMUSG00000027347"/>
<dbReference type="eggNOG" id="KOG3417">
    <property type="taxonomic scope" value="Eukaryota"/>
</dbReference>
<dbReference type="GeneTree" id="ENSGT00940000158910"/>
<dbReference type="InParanoid" id="Q9Z1S3"/>
<dbReference type="OMA" id="CAKWENG"/>
<dbReference type="OrthoDB" id="546434at2759"/>
<dbReference type="PhylomeDB" id="Q9Z1S3"/>
<dbReference type="TreeFam" id="TF312918"/>
<dbReference type="Reactome" id="R-MMU-1169092">
    <property type="pathway name" value="Activation of RAS in B cells"/>
</dbReference>
<dbReference type="Reactome" id="R-MMU-354192">
    <property type="pathway name" value="Integrin signaling"/>
</dbReference>
<dbReference type="Reactome" id="R-MMU-392517">
    <property type="pathway name" value="Rap1 signalling"/>
</dbReference>
<dbReference type="Reactome" id="R-MMU-5673001">
    <property type="pathway name" value="RAF/MAP kinase cascade"/>
</dbReference>
<dbReference type="BioGRID-ORCS" id="19419">
    <property type="hits" value="5 hits in 76 CRISPR screens"/>
</dbReference>
<dbReference type="PRO" id="PR:Q9Z1S3"/>
<dbReference type="Proteomes" id="UP000000589">
    <property type="component" value="Chromosome 2"/>
</dbReference>
<dbReference type="RNAct" id="Q9Z1S3">
    <property type="molecule type" value="protein"/>
</dbReference>
<dbReference type="Bgee" id="ENSMUSG00000027347">
    <property type="expression patterns" value="Expressed in olfactory tubercle and 154 other cell types or tissues"/>
</dbReference>
<dbReference type="ExpressionAtlas" id="Q9Z1S3">
    <property type="expression patterns" value="baseline and differential"/>
</dbReference>
<dbReference type="GO" id="GO:0005829">
    <property type="term" value="C:cytosol"/>
    <property type="evidence" value="ECO:0000304"/>
    <property type="project" value="Reactome"/>
</dbReference>
<dbReference type="GO" id="GO:0005789">
    <property type="term" value="C:endoplasmic reticulum membrane"/>
    <property type="evidence" value="ECO:0007669"/>
    <property type="project" value="UniProtKB-SubCell"/>
</dbReference>
<dbReference type="GO" id="GO:0000139">
    <property type="term" value="C:Golgi membrane"/>
    <property type="evidence" value="ECO:0007669"/>
    <property type="project" value="UniProtKB-SubCell"/>
</dbReference>
<dbReference type="GO" id="GO:0005886">
    <property type="term" value="C:plasma membrane"/>
    <property type="evidence" value="ECO:0000304"/>
    <property type="project" value="Reactome"/>
</dbReference>
<dbReference type="GO" id="GO:0005509">
    <property type="term" value="F:calcium ion binding"/>
    <property type="evidence" value="ECO:0007669"/>
    <property type="project" value="Ensembl"/>
</dbReference>
<dbReference type="GO" id="GO:0019992">
    <property type="term" value="F:diacylglycerol binding"/>
    <property type="evidence" value="ECO:0007669"/>
    <property type="project" value="Ensembl"/>
</dbReference>
<dbReference type="GO" id="GO:0005085">
    <property type="term" value="F:guanyl-nucleotide exchange factor activity"/>
    <property type="evidence" value="ECO:0007669"/>
    <property type="project" value="UniProtKB-KW"/>
</dbReference>
<dbReference type="GO" id="GO:0042802">
    <property type="term" value="F:identical protein binding"/>
    <property type="evidence" value="ECO:0007669"/>
    <property type="project" value="Ensembl"/>
</dbReference>
<dbReference type="GO" id="GO:0031210">
    <property type="term" value="F:phosphatidylcholine binding"/>
    <property type="evidence" value="ECO:0007669"/>
    <property type="project" value="Ensembl"/>
</dbReference>
<dbReference type="GO" id="GO:0008270">
    <property type="term" value="F:zinc ion binding"/>
    <property type="evidence" value="ECO:0007669"/>
    <property type="project" value="UniProtKB-KW"/>
</dbReference>
<dbReference type="GO" id="GO:0090630">
    <property type="term" value="P:activation of GTPase activity"/>
    <property type="evidence" value="ECO:0000315"/>
    <property type="project" value="CACAO"/>
</dbReference>
<dbReference type="GO" id="GO:0042100">
    <property type="term" value="P:B cell proliferation"/>
    <property type="evidence" value="ECO:0007669"/>
    <property type="project" value="Ensembl"/>
</dbReference>
<dbReference type="GO" id="GO:0030154">
    <property type="term" value="P:cell differentiation"/>
    <property type="evidence" value="ECO:0007669"/>
    <property type="project" value="UniProtKB-KW"/>
</dbReference>
<dbReference type="GO" id="GO:0002437">
    <property type="term" value="P:inflammatory response to antigenic stimulus"/>
    <property type="evidence" value="ECO:0000315"/>
    <property type="project" value="MGI"/>
</dbReference>
<dbReference type="GO" id="GO:0043303">
    <property type="term" value="P:mast cell degranulation"/>
    <property type="evidence" value="ECO:0000315"/>
    <property type="project" value="MGI"/>
</dbReference>
<dbReference type="GO" id="GO:0030101">
    <property type="term" value="P:natural killer cell activation"/>
    <property type="evidence" value="ECO:0007669"/>
    <property type="project" value="Ensembl"/>
</dbReference>
<dbReference type="GO" id="GO:0032816">
    <property type="term" value="P:positive regulation of natural killer cell activation"/>
    <property type="evidence" value="ECO:0000315"/>
    <property type="project" value="CACAO"/>
</dbReference>
<dbReference type="GO" id="GO:0032825">
    <property type="term" value="P:positive regulation of natural killer cell differentiation"/>
    <property type="evidence" value="ECO:0000315"/>
    <property type="project" value="CACAO"/>
</dbReference>
<dbReference type="GO" id="GO:0045954">
    <property type="term" value="P:positive regulation of natural killer cell mediated cytotoxicity"/>
    <property type="evidence" value="ECO:0007669"/>
    <property type="project" value="Ensembl"/>
</dbReference>
<dbReference type="GO" id="GO:0046579">
    <property type="term" value="P:positive regulation of Ras protein signal transduction"/>
    <property type="evidence" value="ECO:0007669"/>
    <property type="project" value="Ensembl"/>
</dbReference>
<dbReference type="GO" id="GO:0033089">
    <property type="term" value="P:positive regulation of T cell differentiation in thymus"/>
    <property type="evidence" value="ECO:0000315"/>
    <property type="project" value="CACAO"/>
</dbReference>
<dbReference type="GO" id="GO:0070372">
    <property type="term" value="P:regulation of ERK1 and ERK2 cascade"/>
    <property type="evidence" value="ECO:0007669"/>
    <property type="project" value="Ensembl"/>
</dbReference>
<dbReference type="GO" id="GO:0051896">
    <property type="term" value="P:regulation of phosphatidylinositol 3-kinase/protein kinase B signal transduction"/>
    <property type="evidence" value="ECO:0000315"/>
    <property type="project" value="MGI"/>
</dbReference>
<dbReference type="GO" id="GO:0032252">
    <property type="term" value="P:secretory granule localization"/>
    <property type="evidence" value="ECO:0000315"/>
    <property type="project" value="MGI"/>
</dbReference>
<dbReference type="GO" id="GO:0007264">
    <property type="term" value="P:small GTPase-mediated signal transduction"/>
    <property type="evidence" value="ECO:0007669"/>
    <property type="project" value="InterPro"/>
</dbReference>
<dbReference type="GO" id="GO:0042098">
    <property type="term" value="P:T cell proliferation"/>
    <property type="evidence" value="ECO:0007669"/>
    <property type="project" value="Ensembl"/>
</dbReference>
<dbReference type="GO" id="GO:0047496">
    <property type="term" value="P:vesicle transport along microtubule"/>
    <property type="evidence" value="ECO:0000315"/>
    <property type="project" value="MGI"/>
</dbReference>
<dbReference type="CDD" id="cd20860">
    <property type="entry name" value="C1_RASGRP1"/>
    <property type="match status" value="1"/>
</dbReference>
<dbReference type="CDD" id="cd22290">
    <property type="entry name" value="cc_RasGRP1_C"/>
    <property type="match status" value="1"/>
</dbReference>
<dbReference type="CDD" id="cd00051">
    <property type="entry name" value="EFh"/>
    <property type="match status" value="1"/>
</dbReference>
<dbReference type="CDD" id="cd00155">
    <property type="entry name" value="RasGEF"/>
    <property type="match status" value="1"/>
</dbReference>
<dbReference type="CDD" id="cd06224">
    <property type="entry name" value="REM"/>
    <property type="match status" value="1"/>
</dbReference>
<dbReference type="FunFam" id="1.20.870.10:FF:000008">
    <property type="entry name" value="RAS guanyl-releasing protein 1 isoform X1"/>
    <property type="match status" value="1"/>
</dbReference>
<dbReference type="FunFam" id="3.30.60.20:FF:000023">
    <property type="entry name" value="RAS guanyl-releasing protein 1 isoform X1"/>
    <property type="match status" value="1"/>
</dbReference>
<dbReference type="FunFam" id="1.10.238.10:FF:000051">
    <property type="entry name" value="Ras guanyl-releasing protein 3 isoform 1"/>
    <property type="match status" value="1"/>
</dbReference>
<dbReference type="FunFam" id="1.10.840.10:FF:000003">
    <property type="entry name" value="Ras guanyl-releasing protein 3 isoform 1"/>
    <property type="match status" value="1"/>
</dbReference>
<dbReference type="Gene3D" id="3.30.60.20">
    <property type="match status" value="1"/>
</dbReference>
<dbReference type="Gene3D" id="6.10.250.2730">
    <property type="match status" value="1"/>
</dbReference>
<dbReference type="Gene3D" id="1.10.238.10">
    <property type="entry name" value="EF-hand"/>
    <property type="match status" value="1"/>
</dbReference>
<dbReference type="Gene3D" id="1.10.840.10">
    <property type="entry name" value="Ras guanine-nucleotide exchange factors catalytic domain"/>
    <property type="match status" value="1"/>
</dbReference>
<dbReference type="Gene3D" id="1.20.870.10">
    <property type="entry name" value="Son of sevenless (SoS) protein Chain: S domain 1"/>
    <property type="match status" value="1"/>
</dbReference>
<dbReference type="InterPro" id="IPR046349">
    <property type="entry name" value="C1-like_sf"/>
</dbReference>
<dbReference type="InterPro" id="IPR020454">
    <property type="entry name" value="DAG/PE-bd"/>
</dbReference>
<dbReference type="InterPro" id="IPR011992">
    <property type="entry name" value="EF-hand-dom_pair"/>
</dbReference>
<dbReference type="InterPro" id="IPR018247">
    <property type="entry name" value="EF_Hand_1_Ca_BS"/>
</dbReference>
<dbReference type="InterPro" id="IPR002048">
    <property type="entry name" value="EF_hand_dom"/>
</dbReference>
<dbReference type="InterPro" id="IPR002219">
    <property type="entry name" value="PE/DAG-bd"/>
</dbReference>
<dbReference type="InterPro" id="IPR008937">
    <property type="entry name" value="Ras-like_GEF"/>
</dbReference>
<dbReference type="InterPro" id="IPR000651">
    <property type="entry name" value="Ras-like_Gua-exchang_fac_N"/>
</dbReference>
<dbReference type="InterPro" id="IPR023578">
    <property type="entry name" value="Ras_GEF_dom_sf"/>
</dbReference>
<dbReference type="InterPro" id="IPR001895">
    <property type="entry name" value="RASGEF_cat_dom"/>
</dbReference>
<dbReference type="InterPro" id="IPR036964">
    <property type="entry name" value="RASGEF_cat_dom_sf"/>
</dbReference>
<dbReference type="PANTHER" id="PTHR23113">
    <property type="entry name" value="GUANINE NUCLEOTIDE EXCHANGE FACTOR"/>
    <property type="match status" value="1"/>
</dbReference>
<dbReference type="PANTHER" id="PTHR23113:SF174">
    <property type="entry name" value="RAS GUANYL-RELEASING PROTEIN 1"/>
    <property type="match status" value="1"/>
</dbReference>
<dbReference type="Pfam" id="PF00130">
    <property type="entry name" value="C1_1"/>
    <property type="match status" value="1"/>
</dbReference>
<dbReference type="Pfam" id="PF13202">
    <property type="entry name" value="EF-hand_5"/>
    <property type="match status" value="1"/>
</dbReference>
<dbReference type="Pfam" id="PF00617">
    <property type="entry name" value="RasGEF"/>
    <property type="match status" value="1"/>
</dbReference>
<dbReference type="Pfam" id="PF00618">
    <property type="entry name" value="RasGEF_N"/>
    <property type="match status" value="1"/>
</dbReference>
<dbReference type="PRINTS" id="PR00008">
    <property type="entry name" value="DAGPEDOMAIN"/>
</dbReference>
<dbReference type="SMART" id="SM00109">
    <property type="entry name" value="C1"/>
    <property type="match status" value="1"/>
</dbReference>
<dbReference type="SMART" id="SM00054">
    <property type="entry name" value="EFh"/>
    <property type="match status" value="1"/>
</dbReference>
<dbReference type="SMART" id="SM00147">
    <property type="entry name" value="RasGEF"/>
    <property type="match status" value="1"/>
</dbReference>
<dbReference type="SMART" id="SM00229">
    <property type="entry name" value="RasGEFN"/>
    <property type="match status" value="1"/>
</dbReference>
<dbReference type="SUPFAM" id="SSF57889">
    <property type="entry name" value="Cysteine-rich domain"/>
    <property type="match status" value="1"/>
</dbReference>
<dbReference type="SUPFAM" id="SSF47473">
    <property type="entry name" value="EF-hand"/>
    <property type="match status" value="1"/>
</dbReference>
<dbReference type="SUPFAM" id="SSF48366">
    <property type="entry name" value="Ras GEF"/>
    <property type="match status" value="1"/>
</dbReference>
<dbReference type="PROSITE" id="PS00018">
    <property type="entry name" value="EF_HAND_1"/>
    <property type="match status" value="2"/>
</dbReference>
<dbReference type="PROSITE" id="PS50222">
    <property type="entry name" value="EF_HAND_2"/>
    <property type="match status" value="3"/>
</dbReference>
<dbReference type="PROSITE" id="PS50009">
    <property type="entry name" value="RASGEF_CAT"/>
    <property type="match status" value="1"/>
</dbReference>
<dbReference type="PROSITE" id="PS50212">
    <property type="entry name" value="RASGEF_NTER"/>
    <property type="match status" value="1"/>
</dbReference>
<dbReference type="PROSITE" id="PS00479">
    <property type="entry name" value="ZF_DAG_PE_1"/>
    <property type="match status" value="1"/>
</dbReference>
<dbReference type="PROSITE" id="PS50081">
    <property type="entry name" value="ZF_DAG_PE_2"/>
    <property type="match status" value="1"/>
</dbReference>
<name>GRP1_MOUSE</name>
<proteinExistence type="evidence at protein level"/>
<sequence length="795" mass="90304">MGTLGKAREAPRKPCHGSRAGPKARLEAKSTNSPLPAQPSLAQITQFRMMVSLGHLAKGASLDDLIDSCIQSFDADGNLCRNNQLLQVMLTMHRIIISSAELLQKVMNLYKDALEKNSPGVCLKICYFVRYWITEFWIMFKMDASLTSTMEEFQDLVKANGEETHCHLIDTTQINSRDWSRKLTQRIKSNTSKKRKVSLLFDHLEPEELSEHLTYLEFKSFRRISFSDYQNYLVNSCVKENPTMERSIALCNGISQWVQLMVLSRPTPQLRAEVFIKFIHVAQKLHQLQNFNTLMAVIGGLCHSSISRLKETSSHVPHEINKVLGEMTELLSSCRNYDNYRRAYGECTHFKIPILGVHLKDLISLYEAMPDYLEDGKVNVQKLLALYNHINELVQLQEMAPPLDANKDLVHLLTLSLDLYYTEDEIYELSYAREPRNHRAPPLTPSKPPVVVDWASGVSPKPDPKTISKHVQRMVDSVFKNYDLDQDGYISQEEFEKIAASFPFSFCVMDKDREGLISRDEITAYFMRASSIYSKLGLGFPHNFQETTYLKPTFCDNCAGFLWGVIKQGYRCKDCGMNCHKQCKDLVVFECKKRIKSPAISTENISSVVPMSTLCPLGTKDLLHAPEEGSFIFQNGEIVDHSEESKDRTIMLLGVSSQKISVRLKRTVAHKSTQTESFPWVGGETTPGHFVLSSPRKSAQGALYVHSPASPCPSPALVRKRAFVKWENKESLIKPKPELHLRLRTYQELEQEINTLKADNDALKIQLKYAQKKIESLQLGKSNHVLAQMDHGDSA</sequence>
<gene>
    <name type="primary">Rasgrp1</name>
    <name type="synonym">Rasgrp</name>
</gene>
<accession>Q9Z1S3</accession>
<accession>Q3URH0</accession>
<accession>Q3V401</accession>
<accession>Q8BQP6</accession>
<reference key="1">
    <citation type="journal article" date="1999" name="Mamm. Genome">
        <title>RasGRP, a Ras activator: mouse and human cDNA sequences and chromosomal positions.</title>
        <authorList>
            <person name="Bottorff D.A."/>
            <person name="Ebinu J.O."/>
            <person name="Stone J.C."/>
        </authorList>
    </citation>
    <scope>NUCLEOTIDE SEQUENCE [MRNA]</scope>
    <source>
        <strain>C57BL/6 X C3H</strain>
        <tissue>Brain</tissue>
    </source>
</reference>
<reference key="2">
    <citation type="journal article" date="2005" name="Science">
        <title>The transcriptional landscape of the mammalian genome.</title>
        <authorList>
            <person name="Carninci P."/>
            <person name="Kasukawa T."/>
            <person name="Katayama S."/>
            <person name="Gough J."/>
            <person name="Frith M.C."/>
            <person name="Maeda N."/>
            <person name="Oyama R."/>
            <person name="Ravasi T."/>
            <person name="Lenhard B."/>
            <person name="Wells C."/>
            <person name="Kodzius R."/>
            <person name="Shimokawa K."/>
            <person name="Bajic V.B."/>
            <person name="Brenner S.E."/>
            <person name="Batalov S."/>
            <person name="Forrest A.R."/>
            <person name="Zavolan M."/>
            <person name="Davis M.J."/>
            <person name="Wilming L.G."/>
            <person name="Aidinis V."/>
            <person name="Allen J.E."/>
            <person name="Ambesi-Impiombato A."/>
            <person name="Apweiler R."/>
            <person name="Aturaliya R.N."/>
            <person name="Bailey T.L."/>
            <person name="Bansal M."/>
            <person name="Baxter L."/>
            <person name="Beisel K.W."/>
            <person name="Bersano T."/>
            <person name="Bono H."/>
            <person name="Chalk A.M."/>
            <person name="Chiu K.P."/>
            <person name="Choudhary V."/>
            <person name="Christoffels A."/>
            <person name="Clutterbuck D.R."/>
            <person name="Crowe M.L."/>
            <person name="Dalla E."/>
            <person name="Dalrymple B.P."/>
            <person name="de Bono B."/>
            <person name="Della Gatta G."/>
            <person name="di Bernardo D."/>
            <person name="Down T."/>
            <person name="Engstrom P."/>
            <person name="Fagiolini M."/>
            <person name="Faulkner G."/>
            <person name="Fletcher C.F."/>
            <person name="Fukushima T."/>
            <person name="Furuno M."/>
            <person name="Futaki S."/>
            <person name="Gariboldi M."/>
            <person name="Georgii-Hemming P."/>
            <person name="Gingeras T.R."/>
            <person name="Gojobori T."/>
            <person name="Green R.E."/>
            <person name="Gustincich S."/>
            <person name="Harbers M."/>
            <person name="Hayashi Y."/>
            <person name="Hensch T.K."/>
            <person name="Hirokawa N."/>
            <person name="Hill D."/>
            <person name="Huminiecki L."/>
            <person name="Iacono M."/>
            <person name="Ikeo K."/>
            <person name="Iwama A."/>
            <person name="Ishikawa T."/>
            <person name="Jakt M."/>
            <person name="Kanapin A."/>
            <person name="Katoh M."/>
            <person name="Kawasawa Y."/>
            <person name="Kelso J."/>
            <person name="Kitamura H."/>
            <person name="Kitano H."/>
            <person name="Kollias G."/>
            <person name="Krishnan S.P."/>
            <person name="Kruger A."/>
            <person name="Kummerfeld S.K."/>
            <person name="Kurochkin I.V."/>
            <person name="Lareau L.F."/>
            <person name="Lazarevic D."/>
            <person name="Lipovich L."/>
            <person name="Liu J."/>
            <person name="Liuni S."/>
            <person name="McWilliam S."/>
            <person name="Madan Babu M."/>
            <person name="Madera M."/>
            <person name="Marchionni L."/>
            <person name="Matsuda H."/>
            <person name="Matsuzawa S."/>
            <person name="Miki H."/>
            <person name="Mignone F."/>
            <person name="Miyake S."/>
            <person name="Morris K."/>
            <person name="Mottagui-Tabar S."/>
            <person name="Mulder N."/>
            <person name="Nakano N."/>
            <person name="Nakauchi H."/>
            <person name="Ng P."/>
            <person name="Nilsson R."/>
            <person name="Nishiguchi S."/>
            <person name="Nishikawa S."/>
            <person name="Nori F."/>
            <person name="Ohara O."/>
            <person name="Okazaki Y."/>
            <person name="Orlando V."/>
            <person name="Pang K.C."/>
            <person name="Pavan W.J."/>
            <person name="Pavesi G."/>
            <person name="Pesole G."/>
            <person name="Petrovsky N."/>
            <person name="Piazza S."/>
            <person name="Reed J."/>
            <person name="Reid J.F."/>
            <person name="Ring B.Z."/>
            <person name="Ringwald M."/>
            <person name="Rost B."/>
            <person name="Ruan Y."/>
            <person name="Salzberg S.L."/>
            <person name="Sandelin A."/>
            <person name="Schneider C."/>
            <person name="Schoenbach C."/>
            <person name="Sekiguchi K."/>
            <person name="Semple C.A."/>
            <person name="Seno S."/>
            <person name="Sessa L."/>
            <person name="Sheng Y."/>
            <person name="Shibata Y."/>
            <person name="Shimada H."/>
            <person name="Shimada K."/>
            <person name="Silva D."/>
            <person name="Sinclair B."/>
            <person name="Sperling S."/>
            <person name="Stupka E."/>
            <person name="Sugiura K."/>
            <person name="Sultana R."/>
            <person name="Takenaka Y."/>
            <person name="Taki K."/>
            <person name="Tammoja K."/>
            <person name="Tan S.L."/>
            <person name="Tang S."/>
            <person name="Taylor M.S."/>
            <person name="Tegner J."/>
            <person name="Teichmann S.A."/>
            <person name="Ueda H.R."/>
            <person name="van Nimwegen E."/>
            <person name="Verardo R."/>
            <person name="Wei C.L."/>
            <person name="Yagi K."/>
            <person name="Yamanishi H."/>
            <person name="Zabarovsky E."/>
            <person name="Zhu S."/>
            <person name="Zimmer A."/>
            <person name="Hide W."/>
            <person name="Bult C."/>
            <person name="Grimmond S.M."/>
            <person name="Teasdale R.D."/>
            <person name="Liu E.T."/>
            <person name="Brusic V."/>
            <person name="Quackenbush J."/>
            <person name="Wahlestedt C."/>
            <person name="Mattick J.S."/>
            <person name="Hume D.A."/>
            <person name="Kai C."/>
            <person name="Sasaki D."/>
            <person name="Tomaru Y."/>
            <person name="Fukuda S."/>
            <person name="Kanamori-Katayama M."/>
            <person name="Suzuki M."/>
            <person name="Aoki J."/>
            <person name="Arakawa T."/>
            <person name="Iida J."/>
            <person name="Imamura K."/>
            <person name="Itoh M."/>
            <person name="Kato T."/>
            <person name="Kawaji H."/>
            <person name="Kawagashira N."/>
            <person name="Kawashima T."/>
            <person name="Kojima M."/>
            <person name="Kondo S."/>
            <person name="Konno H."/>
            <person name="Nakano K."/>
            <person name="Ninomiya N."/>
            <person name="Nishio T."/>
            <person name="Okada M."/>
            <person name="Plessy C."/>
            <person name="Shibata K."/>
            <person name="Shiraki T."/>
            <person name="Suzuki S."/>
            <person name="Tagami M."/>
            <person name="Waki K."/>
            <person name="Watahiki A."/>
            <person name="Okamura-Oho Y."/>
            <person name="Suzuki H."/>
            <person name="Kawai J."/>
            <person name="Hayashizaki Y."/>
        </authorList>
    </citation>
    <scope>NUCLEOTIDE SEQUENCE [LARGE SCALE MRNA]</scope>
    <source>
        <strain>C57BL/6J</strain>
        <tissue>Brain</tissue>
        <tissue>Corpus striatum</tissue>
        <tissue>Hippocampus</tissue>
    </source>
</reference>
<reference key="3">
    <citation type="journal article" date="2009" name="PLoS Biol.">
        <title>Lineage-specific biology revealed by a finished genome assembly of the mouse.</title>
        <authorList>
            <person name="Church D.M."/>
            <person name="Goodstadt L."/>
            <person name="Hillier L.W."/>
            <person name="Zody M.C."/>
            <person name="Goldstein S."/>
            <person name="She X."/>
            <person name="Bult C.J."/>
            <person name="Agarwala R."/>
            <person name="Cherry J.L."/>
            <person name="DiCuccio M."/>
            <person name="Hlavina W."/>
            <person name="Kapustin Y."/>
            <person name="Meric P."/>
            <person name="Maglott D."/>
            <person name="Birtle Z."/>
            <person name="Marques A.C."/>
            <person name="Graves T."/>
            <person name="Zhou S."/>
            <person name="Teague B."/>
            <person name="Potamousis K."/>
            <person name="Churas C."/>
            <person name="Place M."/>
            <person name="Herschleb J."/>
            <person name="Runnheim R."/>
            <person name="Forrest D."/>
            <person name="Amos-Landgraf J."/>
            <person name="Schwartz D.C."/>
            <person name="Cheng Z."/>
            <person name="Lindblad-Toh K."/>
            <person name="Eichler E.E."/>
            <person name="Ponting C.P."/>
        </authorList>
    </citation>
    <scope>NUCLEOTIDE SEQUENCE [LARGE SCALE GENOMIC DNA]</scope>
    <source>
        <strain>C57BL/6J</strain>
    </source>
</reference>
<reference key="4">
    <citation type="journal article" date="2004" name="Genome Res.">
        <title>The status, quality, and expansion of the NIH full-length cDNA project: the Mammalian Gene Collection (MGC).</title>
        <authorList>
            <consortium name="The MGC Project Team"/>
        </authorList>
    </citation>
    <scope>NUCLEOTIDE SEQUENCE [LARGE SCALE MRNA]</scope>
    <source>
        <strain>C57BL/6J</strain>
        <tissue>Fetal brain</tissue>
    </source>
</reference>
<reference key="5">
    <citation type="journal article" date="1998" name="Mol. Cell. Biol.">
        <title>Regulation of RasGRP via a phorbol ester-responsive C1 domain.</title>
        <authorList>
            <person name="Tognon C.E."/>
            <person name="Kirk H.E."/>
            <person name="Passmore L.A."/>
            <person name="Whitehead I.P."/>
            <person name="Der C.J."/>
            <person name="Kay R.J."/>
        </authorList>
    </citation>
    <scope>FUNCTION</scope>
    <scope>MUTAGENESIS OF ARG-271</scope>
    <scope>SUBCELLULAR LOCATION</scope>
    <scope>TISSUE SPECIFICITY</scope>
</reference>
<reference key="6">
    <citation type="journal article" date="2000" name="Nat. Immunol.">
        <title>RasGRP is essential for mouse thymocyte differentiation and TCR signaling.</title>
        <authorList>
            <person name="Dower N.A."/>
            <person name="Stang S.L."/>
            <person name="Bottorff D.A."/>
            <person name="Ebinu J.O."/>
            <person name="Dickie P."/>
            <person name="Ostergaard H.L."/>
            <person name="Stone J.C."/>
        </authorList>
    </citation>
    <scope>DISRUPTION PHENOTYPE</scope>
    <scope>FUNCTION IN T-CELL ACTIVATION</scope>
    <scope>TISSUE SPECIFICITY</scope>
</reference>
<reference key="7">
    <citation type="journal article" date="2002" name="Immunity">
        <title>RasGRP1 transduces low-grade TCR signals which are critical for T cell development, homeostasis, and differentiation.</title>
        <authorList>
            <person name="Priatel J.J."/>
            <person name="Teh S.-J."/>
            <person name="Dower N.A."/>
            <person name="Stone J.C."/>
            <person name="Teh H.-S."/>
        </authorList>
    </citation>
    <scope>FUNCTION</scope>
    <scope>TISSUE SPECIFICITY</scope>
</reference>
<reference key="8">
    <citation type="journal article" date="2003" name="Immunity">
        <title>Autoimmunity as the consequence of a spontaneous mutation in Rasgrp1.</title>
        <authorList>
            <person name="Layer K."/>
            <person name="Lin G."/>
            <person name="Nencioni A."/>
            <person name="Hu W."/>
            <person name="Schmucker A."/>
            <person name="Antov A.N."/>
            <person name="Li X."/>
            <person name="Takamatsu S."/>
            <person name="Chevassut T."/>
            <person name="Dower N.A."/>
            <person name="Stang S.L."/>
            <person name="Beier D."/>
            <person name="Buhlmann J."/>
            <person name="Bronson R.T."/>
            <person name="Elkon K.B."/>
            <person name="Stone J.C."/>
            <person name="Van Parijs L."/>
            <person name="Lim B."/>
        </authorList>
    </citation>
    <scope>RETRACTED PAPER</scope>
</reference>
<reference key="9">
    <citation type="journal article" date="2012" name="Immunity">
        <authorList>
            <person name="Layer K."/>
            <person name="Lin G."/>
            <person name="Nencioni A."/>
            <person name="Hu W."/>
            <person name="Schmucker A."/>
            <person name="Antov A.N."/>
            <person name="Li X."/>
            <person name="Takamatsu S."/>
            <person name="Chevassut T."/>
            <person name="Dower N.A."/>
            <person name="Stang S.L."/>
            <person name="Beier D."/>
            <person name="Buhlmann J."/>
            <person name="Bronson R.T."/>
            <person name="Elkon K.B."/>
            <person name="Stone J.C."/>
            <person name="Van Parijs L."/>
            <person name="Lim B."/>
        </authorList>
    </citation>
    <scope>RETRACTION NOTICE OF PUBMED:12932358</scope>
</reference>
<reference key="10">
    <citation type="journal article" date="2003" name="J. Biol. Chem.">
        <title>RasGRP1 represents a novel non-protein kinase C phorbol ester signaling pathway in mouse epidermal keratinocytes.</title>
        <authorList>
            <person name="Rambaratsingh R.A."/>
            <person name="Stone J.C."/>
            <person name="Blumberg P.M."/>
            <person name="Lorenzo P.S."/>
        </authorList>
    </citation>
    <scope>FUNCTION</scope>
    <scope>SUBCELLULAR LOCATION</scope>
    <scope>TOPOLOGY</scope>
    <scope>TISSUE SPECIFICITY</scope>
    <scope>INDUCTION BY TPA</scope>
</reference>
<reference key="11">
    <citation type="journal article" date="2003" name="J. Immunol.">
        <title>Transgenic expression of RasGRP1 induces the maturation of double-negative thymocytes and enhances the production of CD8 single-positive thymocytes.</title>
        <authorList>
            <person name="Norment A.M."/>
            <person name="Bogatzki L.Y."/>
            <person name="Klinger M.B."/>
            <person name="Ojala E.W."/>
            <person name="Bevan M.J."/>
            <person name="Kay R.J."/>
        </authorList>
    </citation>
    <scope>FUNCTION</scope>
    <scope>INDUCTION</scope>
</reference>
<reference key="12">
    <citation type="journal article" date="2003" name="Nature">
        <title>Phospholipase Cgamma activates Ras on the Golgi apparatus by means of RasGRP1.</title>
        <authorList>
            <person name="Bivona T.G."/>
            <person name="Perez De Castro I."/>
            <person name="Ahearn I.M."/>
            <person name="Grana T.M."/>
            <person name="Chiu V.K."/>
            <person name="Lockyer P.J."/>
            <person name="Cullen P.J."/>
            <person name="Pellicer A."/>
            <person name="Cox A.D."/>
            <person name="Philips M.R."/>
        </authorList>
    </citation>
    <scope>FUNCTION</scope>
    <scope>SUBCELLULAR LOCATION</scope>
</reference>
<reference key="13">
    <citation type="journal article" date="2004" name="J. Biol. Chem.">
        <title>RasGRP1 sensitizes an immature B cell line to antigen receptor-induced apoptosis.</title>
        <authorList>
            <person name="Guilbault B."/>
            <person name="Kay R.J."/>
        </authorList>
    </citation>
    <scope>FUNCTION IN B-CELLS</scope>
    <scope>TISSUE SPECIFICITY</scope>
    <scope>MUTAGENESIS OF ARG-271</scope>
</reference>
<reference key="14">
    <citation type="journal article" date="2005" name="J. Immunol.">
        <title>RasGRP1 and RasGRP3 regulate B cell proliferation by facilitating B cell receptor-Ras signaling.</title>
        <authorList>
            <person name="Coughlin J.J."/>
            <person name="Stang S.L."/>
            <person name="Dower N.A."/>
            <person name="Stone J.C."/>
        </authorList>
    </citation>
    <scope>FUNCTION</scope>
</reference>
<reference key="15">
    <citation type="journal article" date="2005" name="Oncogene">
        <title>Deregulated expression of RasGRP1 initiates thymic lymphomagenesis independently of T-cell receptors.</title>
        <authorList>
            <person name="Klinger M.B."/>
            <person name="Guilbault B."/>
            <person name="Goulding R.E."/>
            <person name="Kay R.J."/>
        </authorList>
    </citation>
    <scope>FUNCTION</scope>
</reference>
<reference key="16">
    <citation type="journal article" date="2006" name="J. Immunol.">
        <title>RasGRP1 transmits prodifferentiation TCR signaling that is crucial for CD4 T cell development.</title>
        <authorList>
            <person name="Priatel J.J."/>
            <person name="Chen X."/>
            <person name="Dhanji S."/>
            <person name="Abraham N."/>
            <person name="Teh H.-S."/>
        </authorList>
    </citation>
    <scope>DISRUPTION PHENOTYPE</scope>
    <scope>FUNCTION</scope>
</reference>
<reference key="17">
    <citation type="journal article" date="2007" name="Biochem. J.">
        <title>Differential membrane binding and diacylglycerol recognition by C1 domains of RasGRPs.</title>
        <authorList>
            <person name="Johnson J.E."/>
            <person name="Goulding R.E."/>
            <person name="Ding Z."/>
            <person name="Partovi A."/>
            <person name="Anthony K.V."/>
            <person name="Beaulieu N."/>
            <person name="Tazmini G."/>
            <person name="Cornell R.B."/>
            <person name="Kay R.J."/>
        </authorList>
    </citation>
    <scope>DIACYLGLYCEROL-BINDING</scope>
    <scope>SUBCELLULAR LOCATION</scope>
</reference>
<reference key="18">
    <citation type="journal article" date="2007" name="Cancer Res.">
        <title>Transgenic overexpression of RasGRP1 in mouse epidermis results in spontaneous tumors of the skin.</title>
        <authorList>
            <person name="Oki-Idouchi C.E."/>
            <person name="Lorenzo P.S."/>
        </authorList>
    </citation>
    <scope>FUNCTION</scope>
</reference>
<reference key="19">
    <citation type="journal article" date="2007" name="J. Exp. Med.">
        <title>An essential role for RasGRP1 in mast cell function and IgE-mediated allergic response.</title>
        <authorList>
            <person name="Liu Y."/>
            <person name="Zhu M."/>
            <person name="Nishida K."/>
            <person name="Hirano T."/>
            <person name="Zhang W."/>
        </authorList>
    </citation>
    <scope>FUNCTION IN MAST CELL ACTIVATION</scope>
    <scope>TISSUE SPECIFICITY</scope>
</reference>
<reference key="20">
    <citation type="journal article" date="2007" name="J. Immunol.">
        <title>Chronic immunodeficiency in mice lacking RasGRP1 results in CD4 T cell immune activation and exhaustion.</title>
        <authorList>
            <person name="Priatel J.J."/>
            <person name="Chen X."/>
            <person name="Zenewicz L.A."/>
            <person name="Shen H."/>
            <person name="Harder K.W."/>
            <person name="Horwitz M.S."/>
            <person name="Teh H.-S."/>
        </authorList>
    </citation>
    <scope>DISRUPTION PHENOTYPE</scope>
</reference>
<reference key="21">
    <citation type="journal article" date="2007" name="Mol. Biol. Cell">
        <title>Regulation of RasGRP1 by B cell antigen receptor requires cooperativity between three domains controlling translocation to the plasma membrane.</title>
        <authorList>
            <person name="Beaulieu N."/>
            <person name="Zahedi B."/>
            <person name="Goulding R.E."/>
            <person name="Tazmini G."/>
            <person name="Anthony K.V."/>
            <person name="Omeis S.L."/>
            <person name="de Jong D.R."/>
            <person name="Kay R.J."/>
        </authorList>
    </citation>
    <scope>SUBCELLULAR LOCATION</scope>
</reference>
<reference key="22">
    <citation type="journal article" date="2010" name="Cell">
        <title>A tissue-specific atlas of mouse protein phosphorylation and expression.</title>
        <authorList>
            <person name="Huttlin E.L."/>
            <person name="Jedrychowski M.P."/>
            <person name="Elias J.E."/>
            <person name="Goswami T."/>
            <person name="Rad R."/>
            <person name="Beausoleil S.A."/>
            <person name="Villen J."/>
            <person name="Haas W."/>
            <person name="Sowa M.E."/>
            <person name="Gygi S.P."/>
        </authorList>
    </citation>
    <scope>IDENTIFICATION BY MASS SPECTROMETRY [LARGE SCALE ANALYSIS]</scope>
    <source>
        <tissue>Brain</tissue>
    </source>
</reference>
<organism>
    <name type="scientific">Mus musculus</name>
    <name type="common">Mouse</name>
    <dbReference type="NCBI Taxonomy" id="10090"/>
    <lineage>
        <taxon>Eukaryota</taxon>
        <taxon>Metazoa</taxon>
        <taxon>Chordata</taxon>
        <taxon>Craniata</taxon>
        <taxon>Vertebrata</taxon>
        <taxon>Euteleostomi</taxon>
        <taxon>Mammalia</taxon>
        <taxon>Eutheria</taxon>
        <taxon>Euarchontoglires</taxon>
        <taxon>Glires</taxon>
        <taxon>Rodentia</taxon>
        <taxon>Myomorpha</taxon>
        <taxon>Muroidea</taxon>
        <taxon>Muridae</taxon>
        <taxon>Murinae</taxon>
        <taxon>Mus</taxon>
        <taxon>Mus</taxon>
    </lineage>
</organism>